<proteinExistence type="evidence at protein level"/>
<organism>
    <name type="scientific">Saccharomyces cerevisiae (strain ATCC 204508 / S288c)</name>
    <name type="common">Baker's yeast</name>
    <dbReference type="NCBI Taxonomy" id="559292"/>
    <lineage>
        <taxon>Eukaryota</taxon>
        <taxon>Fungi</taxon>
        <taxon>Dikarya</taxon>
        <taxon>Ascomycota</taxon>
        <taxon>Saccharomycotina</taxon>
        <taxon>Saccharomycetes</taxon>
        <taxon>Saccharomycetales</taxon>
        <taxon>Saccharomycetaceae</taxon>
        <taxon>Saccharomyces</taxon>
    </lineage>
</organism>
<accession>Q99247</accession>
<accession>D6W1Y1</accession>
<reference key="1">
    <citation type="journal article" date="1995" name="Yeast">
        <title>A 29.425 kb segment on the left arm of yeast chromosome XV contains more than twice as many unknown as known open reading frames.</title>
        <authorList>
            <person name="Zumstein E."/>
            <person name="Pearson B.M."/>
            <person name="Kalogeropoulos A."/>
            <person name="Schweizer M."/>
        </authorList>
    </citation>
    <scope>NUCLEOTIDE SEQUENCE [GENOMIC DNA]</scope>
    <source>
        <strain>ATCC 96604 / S288c / FY1679</strain>
    </source>
</reference>
<reference key="2">
    <citation type="journal article" date="1997" name="Nature">
        <title>The nucleotide sequence of Saccharomyces cerevisiae chromosome XV.</title>
        <authorList>
            <person name="Dujon B."/>
            <person name="Albermann K."/>
            <person name="Aldea M."/>
            <person name="Alexandraki D."/>
            <person name="Ansorge W."/>
            <person name="Arino J."/>
            <person name="Benes V."/>
            <person name="Bohn C."/>
            <person name="Bolotin-Fukuhara M."/>
            <person name="Bordonne R."/>
            <person name="Boyer J."/>
            <person name="Camasses A."/>
            <person name="Casamayor A."/>
            <person name="Casas C."/>
            <person name="Cheret G."/>
            <person name="Cziepluch C."/>
            <person name="Daignan-Fornier B."/>
            <person name="Dang V.-D."/>
            <person name="de Haan M."/>
            <person name="Delius H."/>
            <person name="Durand P."/>
            <person name="Fairhead C."/>
            <person name="Feldmann H."/>
            <person name="Gaillon L."/>
            <person name="Galisson F."/>
            <person name="Gamo F.-J."/>
            <person name="Gancedo C."/>
            <person name="Goffeau A."/>
            <person name="Goulding S.E."/>
            <person name="Grivell L.A."/>
            <person name="Habbig B."/>
            <person name="Hand N.J."/>
            <person name="Hani J."/>
            <person name="Hattenhorst U."/>
            <person name="Hebling U."/>
            <person name="Hernando Y."/>
            <person name="Herrero E."/>
            <person name="Heumann K."/>
            <person name="Hiesel R."/>
            <person name="Hilger F."/>
            <person name="Hofmann B."/>
            <person name="Hollenberg C.P."/>
            <person name="Hughes B."/>
            <person name="Jauniaux J.-C."/>
            <person name="Kalogeropoulos A."/>
            <person name="Katsoulou C."/>
            <person name="Kordes E."/>
            <person name="Lafuente M.J."/>
            <person name="Landt O."/>
            <person name="Louis E.J."/>
            <person name="Maarse A.C."/>
            <person name="Madania A."/>
            <person name="Mannhaupt G."/>
            <person name="Marck C."/>
            <person name="Martin R.P."/>
            <person name="Mewes H.-W."/>
            <person name="Michaux G."/>
            <person name="Paces V."/>
            <person name="Parle-McDermott A.G."/>
            <person name="Pearson B.M."/>
            <person name="Perrin A."/>
            <person name="Pettersson B."/>
            <person name="Poch O."/>
            <person name="Pohl T.M."/>
            <person name="Poirey R."/>
            <person name="Portetelle D."/>
            <person name="Pujol A."/>
            <person name="Purnelle B."/>
            <person name="Ramezani Rad M."/>
            <person name="Rechmann S."/>
            <person name="Schwager C."/>
            <person name="Schweizer M."/>
            <person name="Sor F."/>
            <person name="Sterky F."/>
            <person name="Tarassov I.A."/>
            <person name="Teodoru C."/>
            <person name="Tettelin H."/>
            <person name="Thierry A."/>
            <person name="Tobiasch E."/>
            <person name="Tzermia M."/>
            <person name="Uhlen M."/>
            <person name="Unseld M."/>
            <person name="Valens M."/>
            <person name="Vandenbol M."/>
            <person name="Vetter I."/>
            <person name="Vlcek C."/>
            <person name="Voet M."/>
            <person name="Volckaert G."/>
            <person name="Voss H."/>
            <person name="Wambutt R."/>
            <person name="Wedler H."/>
            <person name="Wiemann S."/>
            <person name="Winsor B."/>
            <person name="Wolfe K.H."/>
            <person name="Zollner A."/>
            <person name="Zumstein E."/>
            <person name="Kleine K."/>
        </authorList>
    </citation>
    <scope>NUCLEOTIDE SEQUENCE [LARGE SCALE GENOMIC DNA]</scope>
    <source>
        <strain>ATCC 204508 / S288c</strain>
    </source>
</reference>
<reference key="3">
    <citation type="journal article" date="2014" name="G3 (Bethesda)">
        <title>The reference genome sequence of Saccharomyces cerevisiae: Then and now.</title>
        <authorList>
            <person name="Engel S.R."/>
            <person name="Dietrich F.S."/>
            <person name="Fisk D.G."/>
            <person name="Binkley G."/>
            <person name="Balakrishnan R."/>
            <person name="Costanzo M.C."/>
            <person name="Dwight S.S."/>
            <person name="Hitz B.C."/>
            <person name="Karra K."/>
            <person name="Nash R.S."/>
            <person name="Weng S."/>
            <person name="Wong E.D."/>
            <person name="Lloyd P."/>
            <person name="Skrzypek M.S."/>
            <person name="Miyasato S.R."/>
            <person name="Simison M."/>
            <person name="Cherry J.M."/>
        </authorList>
    </citation>
    <scope>GENOME REANNOTATION</scope>
    <source>
        <strain>ATCC 204508 / S288c</strain>
    </source>
</reference>
<reference key="4">
    <citation type="journal article" date="1999" name="Yeast">
        <title>Chemotyping of yeast mutants using robotics.</title>
        <authorList>
            <person name="Rieger K.-J."/>
            <person name="El-Alama M."/>
            <person name="Stein G."/>
            <person name="Bradshaw C."/>
            <person name="Slonimski P.P."/>
            <person name="Maundrell K."/>
        </authorList>
    </citation>
    <scope>FUNCTION</scope>
</reference>
<reference key="5">
    <citation type="journal article" date="2003" name="Nature">
        <title>Global analysis of protein localization in budding yeast.</title>
        <authorList>
            <person name="Huh W.-K."/>
            <person name="Falvo J.V."/>
            <person name="Gerke L.C."/>
            <person name="Carroll A.S."/>
            <person name="Howson R.W."/>
            <person name="Weissman J.S."/>
            <person name="O'Shea E.K."/>
        </authorList>
    </citation>
    <scope>SUBCELLULAR LOCATION [LARGE SCALE ANALYSIS]</scope>
</reference>
<reference key="6">
    <citation type="journal article" date="2003" name="Nature">
        <title>Global analysis of protein expression in yeast.</title>
        <authorList>
            <person name="Ghaemmaghami S."/>
            <person name="Huh W.-K."/>
            <person name="Bower K."/>
            <person name="Howson R.W."/>
            <person name="Belle A."/>
            <person name="Dephoure N."/>
            <person name="O'Shea E.K."/>
            <person name="Weissman J.S."/>
        </authorList>
    </citation>
    <scope>LEVEL OF PROTEIN EXPRESSION [LARGE SCALE ANALYSIS]</scope>
</reference>
<reference key="7">
    <citation type="journal article" date="2008" name="Mol. Cell. Proteomics">
        <title>A multidimensional chromatography technology for in-depth phosphoproteome analysis.</title>
        <authorList>
            <person name="Albuquerque C.P."/>
            <person name="Smolka M.B."/>
            <person name="Payne S.H."/>
            <person name="Bafna V."/>
            <person name="Eng J."/>
            <person name="Zhou H."/>
        </authorList>
    </citation>
    <scope>PHOSPHORYLATION [LARGE SCALE ANALYSIS] AT THR-693</scope>
    <scope>IDENTIFICATION BY MASS SPECTROMETRY [LARGE SCALE ANALYSIS]</scope>
</reference>
<reference key="8">
    <citation type="journal article" date="2009" name="Science">
        <title>Global analysis of Cdk1 substrate phosphorylation sites provides insights into evolution.</title>
        <authorList>
            <person name="Holt L.J."/>
            <person name="Tuch B.B."/>
            <person name="Villen J."/>
            <person name="Johnson A.D."/>
            <person name="Gygi S.P."/>
            <person name="Morgan D.O."/>
        </authorList>
    </citation>
    <scope>PHOSPHORYLATION [LARGE SCALE ANALYSIS] AT SER-668</scope>
    <scope>IDENTIFICATION BY MASS SPECTROMETRY [LARGE SCALE ANALYSIS]</scope>
</reference>
<reference key="9">
    <citation type="journal article" date="2010" name="Mol. Cell">
        <title>WD40 repeat propellers define a ubiquitin-binding domain that regulates turnover of F box proteins.</title>
        <authorList>
            <person name="Pashkova N."/>
            <person name="Gakhar L."/>
            <person name="Winistorfer S.C."/>
            <person name="Yu L."/>
            <person name="Ramaswamy S."/>
            <person name="Piper R.C."/>
        </authorList>
    </citation>
    <scope>UBIQUITIN-BINDING</scope>
    <scope>DOMAIN</scope>
</reference>
<keyword id="KW-0963">Cytoplasm</keyword>
<keyword id="KW-0597">Phosphoprotein</keyword>
<keyword id="KW-1185">Reference proteome</keyword>
<keyword id="KW-0677">Repeat</keyword>
<keyword id="KW-0853">WD repeat</keyword>
<dbReference type="EMBL" id="X83121">
    <property type="protein sequence ID" value="CAA58192.1"/>
    <property type="molecule type" value="Genomic_DNA"/>
</dbReference>
<dbReference type="EMBL" id="Z74829">
    <property type="protein sequence ID" value="CAA99099.1"/>
    <property type="molecule type" value="Genomic_DNA"/>
</dbReference>
<dbReference type="EMBL" id="BK006948">
    <property type="protein sequence ID" value="DAA10697.1"/>
    <property type="molecule type" value="Genomic_DNA"/>
</dbReference>
<dbReference type="PIR" id="S57382">
    <property type="entry name" value="S57382"/>
</dbReference>
<dbReference type="RefSeq" id="NP_014554.1">
    <property type="nucleotide sequence ID" value="NM_001183341.1"/>
</dbReference>
<dbReference type="BioGRID" id="34315">
    <property type="interactions" value="127"/>
</dbReference>
<dbReference type="DIP" id="DIP-6391N"/>
<dbReference type="FunCoup" id="Q99247">
    <property type="interactions" value="107"/>
</dbReference>
<dbReference type="IntAct" id="Q99247">
    <property type="interactions" value="30"/>
</dbReference>
<dbReference type="MINT" id="Q99247"/>
<dbReference type="STRING" id="4932.YOL087C"/>
<dbReference type="iPTMnet" id="Q99247"/>
<dbReference type="PaxDb" id="4932-YOL087C"/>
<dbReference type="PeptideAtlas" id="Q99247"/>
<dbReference type="EnsemblFungi" id="YOL087C_mRNA">
    <property type="protein sequence ID" value="YOL087C"/>
    <property type="gene ID" value="YOL087C"/>
</dbReference>
<dbReference type="GeneID" id="854066"/>
<dbReference type="KEGG" id="sce:YOL087C"/>
<dbReference type="AGR" id="SGD:S000005447"/>
<dbReference type="SGD" id="S000005447">
    <property type="gene designation" value="DUF1"/>
</dbReference>
<dbReference type="VEuPathDB" id="FungiDB:YOL087C"/>
<dbReference type="eggNOG" id="KOG0308">
    <property type="taxonomic scope" value="Eukaryota"/>
</dbReference>
<dbReference type="HOGENOM" id="CLU_297547_0_0_1"/>
<dbReference type="InParanoid" id="Q99247"/>
<dbReference type="OMA" id="WDIVSCE"/>
<dbReference type="OrthoDB" id="2421129at2759"/>
<dbReference type="BioCyc" id="YEAST:G3O-33488-MONOMER"/>
<dbReference type="BioGRID-ORCS" id="854066">
    <property type="hits" value="0 hits in 10 CRISPR screens"/>
</dbReference>
<dbReference type="PRO" id="PR:Q99247"/>
<dbReference type="Proteomes" id="UP000002311">
    <property type="component" value="Chromosome XV"/>
</dbReference>
<dbReference type="RNAct" id="Q99247">
    <property type="molecule type" value="protein"/>
</dbReference>
<dbReference type="GO" id="GO:0005737">
    <property type="term" value="C:cytoplasm"/>
    <property type="evidence" value="ECO:0007005"/>
    <property type="project" value="SGD"/>
</dbReference>
<dbReference type="GO" id="GO:0043130">
    <property type="term" value="F:ubiquitin binding"/>
    <property type="evidence" value="ECO:0000314"/>
    <property type="project" value="SGD"/>
</dbReference>
<dbReference type="GO" id="GO:0000724">
    <property type="term" value="P:double-strand break repair via homologous recombination"/>
    <property type="evidence" value="ECO:0000318"/>
    <property type="project" value="GO_Central"/>
</dbReference>
<dbReference type="CDD" id="cd17041">
    <property type="entry name" value="Ubl_WDR48"/>
    <property type="match status" value="1"/>
</dbReference>
<dbReference type="Gene3D" id="2.130.10.10">
    <property type="entry name" value="YVTN repeat-like/Quinoprotein amine dehydrogenase"/>
    <property type="match status" value="2"/>
</dbReference>
<dbReference type="InterPro" id="IPR015943">
    <property type="entry name" value="WD40/YVTN_repeat-like_dom_sf"/>
</dbReference>
<dbReference type="InterPro" id="IPR019775">
    <property type="entry name" value="WD40_repeat_CS"/>
</dbReference>
<dbReference type="InterPro" id="IPR036322">
    <property type="entry name" value="WD40_repeat_dom_sf"/>
</dbReference>
<dbReference type="InterPro" id="IPR001680">
    <property type="entry name" value="WD40_rpt"/>
</dbReference>
<dbReference type="InterPro" id="IPR051246">
    <property type="entry name" value="WDR48"/>
</dbReference>
<dbReference type="InterPro" id="IPR021772">
    <property type="entry name" value="WDR48/Bun107"/>
</dbReference>
<dbReference type="PANTHER" id="PTHR19862">
    <property type="entry name" value="WD REPEAT-CONTAINING PROTEIN 48"/>
    <property type="match status" value="1"/>
</dbReference>
<dbReference type="PANTHER" id="PTHR19862:SF14">
    <property type="entry name" value="WD REPEAT-CONTAINING PROTEIN 48"/>
    <property type="match status" value="1"/>
</dbReference>
<dbReference type="Pfam" id="PF11816">
    <property type="entry name" value="DUF3337"/>
    <property type="match status" value="1"/>
</dbReference>
<dbReference type="Pfam" id="PF00400">
    <property type="entry name" value="WD40"/>
    <property type="match status" value="1"/>
</dbReference>
<dbReference type="SMART" id="SM00320">
    <property type="entry name" value="WD40"/>
    <property type="match status" value="4"/>
</dbReference>
<dbReference type="SUPFAM" id="SSF50978">
    <property type="entry name" value="WD40 repeat-like"/>
    <property type="match status" value="2"/>
</dbReference>
<dbReference type="PROSITE" id="PS00678">
    <property type="entry name" value="WD_REPEATS_1"/>
    <property type="match status" value="1"/>
</dbReference>
<dbReference type="PROSITE" id="PS50082">
    <property type="entry name" value="WD_REPEATS_2"/>
    <property type="match status" value="1"/>
</dbReference>
<dbReference type="PROSITE" id="PS50294">
    <property type="entry name" value="WD_REPEATS_REGION"/>
    <property type="match status" value="1"/>
</dbReference>
<feature type="chain" id="PRO_0000235919" description="DUB-associated factor 1">
    <location>
        <begin position="1"/>
        <end position="1116"/>
    </location>
</feature>
<feature type="repeat" description="WD 1">
    <location>
        <begin position="21"/>
        <end position="62"/>
    </location>
</feature>
<feature type="repeat" description="WD 2">
    <location>
        <begin position="91"/>
        <end position="132"/>
    </location>
</feature>
<feature type="repeat" description="WD 3">
    <location>
        <begin position="160"/>
        <end position="200"/>
    </location>
</feature>
<feature type="repeat" description="WD 4">
    <location>
        <begin position="219"/>
        <end position="262"/>
    </location>
</feature>
<feature type="repeat" description="WD 5">
    <location>
        <begin position="266"/>
        <end position="305"/>
    </location>
</feature>
<feature type="repeat" description="WD 6">
    <location>
        <begin position="387"/>
        <end position="426"/>
    </location>
</feature>
<feature type="repeat" description="WD 7">
    <location>
        <begin position="428"/>
        <end position="466"/>
    </location>
</feature>
<feature type="region of interest" description="Disordered" evidence="1">
    <location>
        <begin position="578"/>
        <end position="600"/>
    </location>
</feature>
<feature type="region of interest" description="Disordered" evidence="1">
    <location>
        <begin position="747"/>
        <end position="784"/>
    </location>
</feature>
<feature type="region of interest" description="Disordered" evidence="1">
    <location>
        <begin position="963"/>
        <end position="994"/>
    </location>
</feature>
<feature type="compositionally biased region" description="Polar residues" evidence="1">
    <location>
        <begin position="747"/>
        <end position="776"/>
    </location>
</feature>
<feature type="compositionally biased region" description="Low complexity" evidence="1">
    <location>
        <begin position="967"/>
        <end position="987"/>
    </location>
</feature>
<feature type="modified residue" description="Phosphoserine" evidence="8">
    <location>
        <position position="668"/>
    </location>
</feature>
<feature type="modified residue" description="Phosphothreonine" evidence="7">
    <location>
        <position position="693"/>
    </location>
</feature>
<comment type="function">
    <text evidence="2 6">Ubiquitin-binding protein involved in the resistance to phenanthroline, sanguinarine, nordihydroguaiaretic acid (NDGA), isopropyl (N-3-chloro-phenyl)-carbamate (IPCPC) and guanosine 5'-O-(2-thiodiphosphate).</text>
</comment>
<comment type="subunit">
    <text evidence="5">Interacts (via its WD repeats) with ubiquitin.</text>
</comment>
<comment type="subcellular location">
    <subcellularLocation>
        <location evidence="3">Cytoplasm</location>
    </subcellularLocation>
</comment>
<comment type="domain">
    <text evidence="5">The N-terminal WD repeats are involved in ubiquitin-binding.</text>
</comment>
<comment type="miscellaneous">
    <text evidence="4">Present with 589 molecules/cell in log phase SD medium.</text>
</comment>
<protein>
    <recommendedName>
        <fullName evidence="6">DUB-associated factor 1</fullName>
    </recommendedName>
</protein>
<gene>
    <name evidence="6" type="primary">DUF1</name>
    <name type="ordered locus">YOL087C</name>
    <name type="ORF">O0944</name>
</gene>
<name>DUF1_YEAST</name>
<sequence length="1116" mass="125382">MNQLTVSYGLISPDYCTSQDAHILPITKILYPDIPGKNYFLTSGRDGSIILHKNTQLSNEPETAATTIKNDAIRMQVHSDWASDLIHVNMKNSDPSAGDTFISVSHDFSIVLISVNAQLTTWDKKIIGDHDDYIKCIVPIHYEMSNDYELEEQEGGPDNVHDGINNGIVVDEQNNFLFVTGGLDRKIKLWCLSSGPEKMATLLHTFDNAQSNDTGSIYSMSPIIPKYSFDDNQTSRPFDFVAGDCNGDLIFYSCKYRKEVIRIQNAHRTNIKVVRTLDDSTRLISTSSDGVINVWDLNCRHDQTTGALQLPKKIGSWSWDSSIWCVQGTSLDKLYFGDSQGNVMRANLSSYEDAKLTRIFKPDHHHHHHHHHEHEEQNISTTDAKVKKYGGILDIALLPNEKLLFSFCTDSNLNVLDLTNNHFSVNEGGFALTRSSLLTNRRHVITENTKGQMQRWDIVSCELLNTFDSSEGSFDDIVMKYTSKEILSHWCTVSVKVGMLFVKINPKFLKTEVYGSALKDYQVVNNIEINSDERYNLGKIVINSLFNEFISYEVQKDKLLRKKIFSLKKKDLTNSLTLDTGYNSESKKNNKDKKRKSTFKISSTLSIGNTNSSGTPPNSAPATPVMAETIVLEEQPLLQSASDKAIDDSLELVQPLPASKKPYFRTQSSGSLLSRKFKSFRSTSGRATTGLNTPEEPKGILPDTPHVINDDSAFPQAINTTQQSKDATPESMLWNHPFKLEQKLSAISSQDLPSNNTHNKLRSSENSRANSTSTLEGNEKKKPEFMPDLLEQIQESYKQQYMNTSSLKYLTKRLPVTKIIKASSCPIIRVKSATLVLVHLWKEGSCGGRVLFSTLLPPSHVDNETVSGGKENSKPPDDEEVDLQAVDDDKLGKYDLIDGELGSRLNRRQIFEQLEENLPYWFAKALFRDIKTVEEQPKLNFLIMPWSSVGGSEAAGNENKKKFISASDTTESSGNDSSDSSLGNGNEAVSPSTQQQFHNMLKFGRPKTSEQELNPTDLPRISEANVKLVAPGMIRVKKIKLYVADRFETKTPEMKAKMEPSLWLDLLCRGQVLDNDMTLNTVRTLYWKSQGDIVLEYRRKVHNSPLVHEVNGNEGK</sequence>
<evidence type="ECO:0000256" key="1">
    <source>
        <dbReference type="SAM" id="MobiDB-lite"/>
    </source>
</evidence>
<evidence type="ECO:0000269" key="2">
    <source>
    </source>
</evidence>
<evidence type="ECO:0000269" key="3">
    <source>
    </source>
</evidence>
<evidence type="ECO:0000269" key="4">
    <source>
    </source>
</evidence>
<evidence type="ECO:0000269" key="5">
    <source>
    </source>
</evidence>
<evidence type="ECO:0000303" key="6">
    <source>
    </source>
</evidence>
<evidence type="ECO:0007744" key="7">
    <source>
    </source>
</evidence>
<evidence type="ECO:0007744" key="8">
    <source>
    </source>
</evidence>